<accession>C5B852</accession>
<comment type="function">
    <text evidence="1">This protein is one of the two subunits of integration host factor, a specific DNA-binding protein that functions in genetic recombination as well as in transcriptional and translational control.</text>
</comment>
<comment type="subunit">
    <text evidence="1">Heterodimer of an alpha and a beta chain.</text>
</comment>
<comment type="similarity">
    <text evidence="1">Belongs to the bacterial histone-like protein family.</text>
</comment>
<gene>
    <name evidence="1" type="primary">ihfA</name>
    <name evidence="1" type="synonym">himA</name>
    <name type="ordered locus">NT01EI_1892</name>
</gene>
<sequence>MALTKAEMSEHLFEKLGLSKRDAKDLVELFFEEIRRALENGEQVKLSGFGNFDLRDKNQRPGRNPKTGEDIPITARRVVTFRPGQKLKCRVENATPKD</sequence>
<name>IHFA_EDWI9</name>
<organism>
    <name type="scientific">Edwardsiella ictaluri (strain 93-146)</name>
    <dbReference type="NCBI Taxonomy" id="634503"/>
    <lineage>
        <taxon>Bacteria</taxon>
        <taxon>Pseudomonadati</taxon>
        <taxon>Pseudomonadota</taxon>
        <taxon>Gammaproteobacteria</taxon>
        <taxon>Enterobacterales</taxon>
        <taxon>Hafniaceae</taxon>
        <taxon>Edwardsiella</taxon>
    </lineage>
</organism>
<protein>
    <recommendedName>
        <fullName evidence="1">Integration host factor subunit alpha</fullName>
        <shortName evidence="1">IHF-alpha</shortName>
    </recommendedName>
</protein>
<keyword id="KW-0233">DNA recombination</keyword>
<keyword id="KW-0238">DNA-binding</keyword>
<keyword id="KW-0804">Transcription</keyword>
<keyword id="KW-0805">Transcription regulation</keyword>
<keyword id="KW-0810">Translation regulation</keyword>
<proteinExistence type="inferred from homology"/>
<feature type="chain" id="PRO_1000205690" description="Integration host factor subunit alpha">
    <location>
        <begin position="1"/>
        <end position="98"/>
    </location>
</feature>
<feature type="region of interest" description="Disordered" evidence="2">
    <location>
        <begin position="49"/>
        <end position="71"/>
    </location>
</feature>
<evidence type="ECO:0000255" key="1">
    <source>
        <dbReference type="HAMAP-Rule" id="MF_00380"/>
    </source>
</evidence>
<evidence type="ECO:0000256" key="2">
    <source>
        <dbReference type="SAM" id="MobiDB-lite"/>
    </source>
</evidence>
<dbReference type="EMBL" id="CP001600">
    <property type="protein sequence ID" value="ACR69068.1"/>
    <property type="molecule type" value="Genomic_DNA"/>
</dbReference>
<dbReference type="RefSeq" id="WP_015871212.1">
    <property type="nucleotide sequence ID" value="NZ_CP169062.1"/>
</dbReference>
<dbReference type="SMR" id="C5B852"/>
<dbReference type="STRING" id="67780.B6E78_02490"/>
<dbReference type="GeneID" id="69538838"/>
<dbReference type="KEGG" id="eic:NT01EI_1892"/>
<dbReference type="PATRIC" id="fig|634503.3.peg.1695"/>
<dbReference type="HOGENOM" id="CLU_105066_1_3_6"/>
<dbReference type="OrthoDB" id="9797747at2"/>
<dbReference type="Proteomes" id="UP000001485">
    <property type="component" value="Chromosome"/>
</dbReference>
<dbReference type="GO" id="GO:0005829">
    <property type="term" value="C:cytosol"/>
    <property type="evidence" value="ECO:0007669"/>
    <property type="project" value="TreeGrafter"/>
</dbReference>
<dbReference type="GO" id="GO:0003677">
    <property type="term" value="F:DNA binding"/>
    <property type="evidence" value="ECO:0007669"/>
    <property type="project" value="UniProtKB-UniRule"/>
</dbReference>
<dbReference type="GO" id="GO:0030527">
    <property type="term" value="F:structural constituent of chromatin"/>
    <property type="evidence" value="ECO:0007669"/>
    <property type="project" value="InterPro"/>
</dbReference>
<dbReference type="GO" id="GO:0006310">
    <property type="term" value="P:DNA recombination"/>
    <property type="evidence" value="ECO:0007669"/>
    <property type="project" value="UniProtKB-UniRule"/>
</dbReference>
<dbReference type="GO" id="GO:0009893">
    <property type="term" value="P:positive regulation of metabolic process"/>
    <property type="evidence" value="ECO:0007669"/>
    <property type="project" value="UniProtKB-ARBA"/>
</dbReference>
<dbReference type="GO" id="GO:0006355">
    <property type="term" value="P:regulation of DNA-templated transcription"/>
    <property type="evidence" value="ECO:0007669"/>
    <property type="project" value="UniProtKB-UniRule"/>
</dbReference>
<dbReference type="GO" id="GO:0006417">
    <property type="term" value="P:regulation of translation"/>
    <property type="evidence" value="ECO:0007669"/>
    <property type="project" value="UniProtKB-UniRule"/>
</dbReference>
<dbReference type="CDD" id="cd13835">
    <property type="entry name" value="IHF_A"/>
    <property type="match status" value="1"/>
</dbReference>
<dbReference type="FunFam" id="4.10.520.10:FF:000002">
    <property type="entry name" value="Integration host factor subunit alpha"/>
    <property type="match status" value="1"/>
</dbReference>
<dbReference type="Gene3D" id="4.10.520.10">
    <property type="entry name" value="IHF-like DNA-binding proteins"/>
    <property type="match status" value="1"/>
</dbReference>
<dbReference type="HAMAP" id="MF_00380">
    <property type="entry name" value="IHF_alpha"/>
    <property type="match status" value="1"/>
</dbReference>
<dbReference type="InterPro" id="IPR000119">
    <property type="entry name" value="Hist_DNA-bd"/>
</dbReference>
<dbReference type="InterPro" id="IPR020816">
    <property type="entry name" value="Histone-like_DNA-bd_CS"/>
</dbReference>
<dbReference type="InterPro" id="IPR010992">
    <property type="entry name" value="IHF-like_DNA-bd_dom_sf"/>
</dbReference>
<dbReference type="InterPro" id="IPR005684">
    <property type="entry name" value="IHF_alpha"/>
</dbReference>
<dbReference type="NCBIfam" id="TIGR00987">
    <property type="entry name" value="himA"/>
    <property type="match status" value="1"/>
</dbReference>
<dbReference type="NCBIfam" id="NF001401">
    <property type="entry name" value="PRK00285.1"/>
    <property type="match status" value="1"/>
</dbReference>
<dbReference type="PANTHER" id="PTHR33175">
    <property type="entry name" value="DNA-BINDING PROTEIN HU"/>
    <property type="match status" value="1"/>
</dbReference>
<dbReference type="PANTHER" id="PTHR33175:SF2">
    <property type="entry name" value="INTEGRATION HOST FACTOR SUBUNIT ALPHA"/>
    <property type="match status" value="1"/>
</dbReference>
<dbReference type="Pfam" id="PF00216">
    <property type="entry name" value="Bac_DNA_binding"/>
    <property type="match status" value="1"/>
</dbReference>
<dbReference type="PRINTS" id="PR01727">
    <property type="entry name" value="DNABINDINGHU"/>
</dbReference>
<dbReference type="SMART" id="SM00411">
    <property type="entry name" value="BHL"/>
    <property type="match status" value="1"/>
</dbReference>
<dbReference type="SUPFAM" id="SSF47729">
    <property type="entry name" value="IHF-like DNA-binding proteins"/>
    <property type="match status" value="1"/>
</dbReference>
<dbReference type="PROSITE" id="PS00045">
    <property type="entry name" value="HISTONE_LIKE"/>
    <property type="match status" value="1"/>
</dbReference>
<reference key="1">
    <citation type="submission" date="2009-03" db="EMBL/GenBank/DDBJ databases">
        <title>Complete genome sequence of Edwardsiella ictaluri 93-146.</title>
        <authorList>
            <person name="Williams M.L."/>
            <person name="Gillaspy A.F."/>
            <person name="Dyer D.W."/>
            <person name="Thune R.L."/>
            <person name="Waldbieser G.C."/>
            <person name="Schuster S.C."/>
            <person name="Gipson J."/>
            <person name="Zaitshik J."/>
            <person name="Landry C."/>
            <person name="Lawrence M.L."/>
        </authorList>
    </citation>
    <scope>NUCLEOTIDE SEQUENCE [LARGE SCALE GENOMIC DNA]</scope>
    <source>
        <strain>93-146</strain>
    </source>
</reference>